<gene>
    <name evidence="1" type="primary">rpmC</name>
    <name type="ordered locus">ABAYE0416</name>
</gene>
<evidence type="ECO:0000255" key="1">
    <source>
        <dbReference type="HAMAP-Rule" id="MF_00374"/>
    </source>
</evidence>
<evidence type="ECO:0000305" key="2"/>
<name>RL29_ACIBY</name>
<proteinExistence type="inferred from homology"/>
<protein>
    <recommendedName>
        <fullName evidence="1">Large ribosomal subunit protein uL29</fullName>
    </recommendedName>
    <alternativeName>
        <fullName evidence="2">50S ribosomal protein L29</fullName>
    </alternativeName>
</protein>
<sequence length="65" mass="7435">MKTKDLREKSVEELKALLDEQQLNQFRLRMAKATGQLGKSHEVQVARKTIARIKTLLTEKQGNGQ</sequence>
<dbReference type="EMBL" id="CU459141">
    <property type="protein sequence ID" value="CAM85390.1"/>
    <property type="molecule type" value="Genomic_DNA"/>
</dbReference>
<dbReference type="RefSeq" id="WP_000849928.1">
    <property type="nucleotide sequence ID" value="NZ_JBDGFB010000011.1"/>
</dbReference>
<dbReference type="SMR" id="B0V6X6"/>
<dbReference type="EnsemblBacteria" id="CAM85390">
    <property type="protein sequence ID" value="CAM85390"/>
    <property type="gene ID" value="ABAYE0416"/>
</dbReference>
<dbReference type="GeneID" id="9380824"/>
<dbReference type="KEGG" id="aby:ABAYE0416"/>
<dbReference type="HOGENOM" id="CLU_158491_1_2_6"/>
<dbReference type="GO" id="GO:0022625">
    <property type="term" value="C:cytosolic large ribosomal subunit"/>
    <property type="evidence" value="ECO:0007669"/>
    <property type="project" value="TreeGrafter"/>
</dbReference>
<dbReference type="GO" id="GO:0003735">
    <property type="term" value="F:structural constituent of ribosome"/>
    <property type="evidence" value="ECO:0007669"/>
    <property type="project" value="InterPro"/>
</dbReference>
<dbReference type="GO" id="GO:0006412">
    <property type="term" value="P:translation"/>
    <property type="evidence" value="ECO:0007669"/>
    <property type="project" value="UniProtKB-UniRule"/>
</dbReference>
<dbReference type="CDD" id="cd00427">
    <property type="entry name" value="Ribosomal_L29_HIP"/>
    <property type="match status" value="1"/>
</dbReference>
<dbReference type="FunFam" id="1.10.287.310:FF:000001">
    <property type="entry name" value="50S ribosomal protein L29"/>
    <property type="match status" value="1"/>
</dbReference>
<dbReference type="Gene3D" id="1.10.287.310">
    <property type="match status" value="1"/>
</dbReference>
<dbReference type="HAMAP" id="MF_00374">
    <property type="entry name" value="Ribosomal_uL29"/>
    <property type="match status" value="1"/>
</dbReference>
<dbReference type="InterPro" id="IPR050063">
    <property type="entry name" value="Ribosomal_protein_uL29"/>
</dbReference>
<dbReference type="InterPro" id="IPR001854">
    <property type="entry name" value="Ribosomal_uL29"/>
</dbReference>
<dbReference type="InterPro" id="IPR036049">
    <property type="entry name" value="Ribosomal_uL29_sf"/>
</dbReference>
<dbReference type="NCBIfam" id="TIGR00012">
    <property type="entry name" value="L29"/>
    <property type="match status" value="1"/>
</dbReference>
<dbReference type="PANTHER" id="PTHR10916">
    <property type="entry name" value="60S RIBOSOMAL PROTEIN L35/50S RIBOSOMAL PROTEIN L29"/>
    <property type="match status" value="1"/>
</dbReference>
<dbReference type="PANTHER" id="PTHR10916:SF0">
    <property type="entry name" value="LARGE RIBOSOMAL SUBUNIT PROTEIN UL29C"/>
    <property type="match status" value="1"/>
</dbReference>
<dbReference type="Pfam" id="PF00831">
    <property type="entry name" value="Ribosomal_L29"/>
    <property type="match status" value="1"/>
</dbReference>
<dbReference type="SUPFAM" id="SSF46561">
    <property type="entry name" value="Ribosomal protein L29 (L29p)"/>
    <property type="match status" value="1"/>
</dbReference>
<keyword id="KW-0687">Ribonucleoprotein</keyword>
<keyword id="KW-0689">Ribosomal protein</keyword>
<accession>B0V6X6</accession>
<comment type="similarity">
    <text evidence="1">Belongs to the universal ribosomal protein uL29 family.</text>
</comment>
<reference key="1">
    <citation type="journal article" date="2008" name="PLoS ONE">
        <title>Comparative analysis of Acinetobacters: three genomes for three lifestyles.</title>
        <authorList>
            <person name="Vallenet D."/>
            <person name="Nordmann P."/>
            <person name="Barbe V."/>
            <person name="Poirel L."/>
            <person name="Mangenot S."/>
            <person name="Bataille E."/>
            <person name="Dossat C."/>
            <person name="Gas S."/>
            <person name="Kreimeyer A."/>
            <person name="Lenoble P."/>
            <person name="Oztas S."/>
            <person name="Poulain J."/>
            <person name="Segurens B."/>
            <person name="Robert C."/>
            <person name="Abergel C."/>
            <person name="Claverie J.-M."/>
            <person name="Raoult D."/>
            <person name="Medigue C."/>
            <person name="Weissenbach J."/>
            <person name="Cruveiller S."/>
        </authorList>
    </citation>
    <scope>NUCLEOTIDE SEQUENCE [LARGE SCALE GENOMIC DNA]</scope>
    <source>
        <strain>AYE</strain>
    </source>
</reference>
<feature type="chain" id="PRO_1000121720" description="Large ribosomal subunit protein uL29">
    <location>
        <begin position="1"/>
        <end position="65"/>
    </location>
</feature>
<organism>
    <name type="scientific">Acinetobacter baumannii (strain AYE)</name>
    <dbReference type="NCBI Taxonomy" id="509173"/>
    <lineage>
        <taxon>Bacteria</taxon>
        <taxon>Pseudomonadati</taxon>
        <taxon>Pseudomonadota</taxon>
        <taxon>Gammaproteobacteria</taxon>
        <taxon>Moraxellales</taxon>
        <taxon>Moraxellaceae</taxon>
        <taxon>Acinetobacter</taxon>
        <taxon>Acinetobacter calcoaceticus/baumannii complex</taxon>
    </lineage>
</organism>